<organism>
    <name type="scientific">Mus musculus</name>
    <name type="common">Mouse</name>
    <dbReference type="NCBI Taxonomy" id="10090"/>
    <lineage>
        <taxon>Eukaryota</taxon>
        <taxon>Metazoa</taxon>
        <taxon>Chordata</taxon>
        <taxon>Craniata</taxon>
        <taxon>Vertebrata</taxon>
        <taxon>Euteleostomi</taxon>
        <taxon>Mammalia</taxon>
        <taxon>Eutheria</taxon>
        <taxon>Euarchontoglires</taxon>
        <taxon>Glires</taxon>
        <taxon>Rodentia</taxon>
        <taxon>Myomorpha</taxon>
        <taxon>Muroidea</taxon>
        <taxon>Muridae</taxon>
        <taxon>Murinae</taxon>
        <taxon>Mus</taxon>
        <taxon>Mus</taxon>
    </lineage>
</organism>
<evidence type="ECO:0000250" key="1">
    <source>
        <dbReference type="UniProtKB" id="P24482"/>
    </source>
</evidence>
<evidence type="ECO:0000250" key="2">
    <source>
        <dbReference type="UniProtKB" id="P56282"/>
    </source>
</evidence>
<evidence type="ECO:0000305" key="3"/>
<sequence>MAPERLRSRTVSAFKLRGLLLRSEATKYLTEALQSVTELELEENLGKIIDAVEKQPLSSNMIERSVVEAAVQECSQSMDETIEHVFNIIGAFDIPRFIYNSERKKFLPLSMTNHAAPTLFGTARDKAELYLERYTILHQRTHRHELFTPPVIGSHLEESGSKFQLKTIETLLGSTSKVGDVIVLGMITQLKEGKFFLEDPTGTVQLDLSKAQFHSGLYTEACFVLAEGWFEDQVFHANAFGFPPTEPSSTTRAYYGNINFFGGPSNASVKTYTKLRQLEDENKDAMFVIVSDVWLDQVQVLEKFHVMFSGYSPAPPTCFILCGNFSSAPYGKNQVQALKDSLKSLADIICEYPSIHQSSRFVFVPGPEDPGFGSILPRPPLAESITQEFRQRVPFSVFTTNPCRIQYCTQEIIIFREDLVNKMCRNCVRFPSSSLDIPTHFVKTILSQGHLAPLPLYVCPVHWAYDYTLRVYPVPDLLVIADKYDPFTVTNTDCLCINPGSFPRSGFAFKVFYPSSKTVEDSKLQGF</sequence>
<protein>
    <recommendedName>
        <fullName>DNA polymerase epsilon subunit 2</fullName>
    </recommendedName>
    <alternativeName>
        <fullName>DNA polymerase II subunit 2</fullName>
    </alternativeName>
    <alternativeName>
        <fullName>DNA polymerase epsilon subunit B</fullName>
    </alternativeName>
</protein>
<keyword id="KW-0235">DNA replication</keyword>
<keyword id="KW-0238">DNA-binding</keyword>
<keyword id="KW-0539">Nucleus</keyword>
<keyword id="KW-1185">Reference proteome</keyword>
<comment type="function">
    <text evidence="1 2">Accessory component of the DNA polymerase epsilon complex (By similarity). Participates in DNA repair and in chromosomal DNA replication (By similarity).</text>
</comment>
<comment type="subunit">
    <text evidence="2">Component of the DNA polymerase epsilon complex consisting of four subunits: the catalytic subunit POLE and the accessory subunits POLE2, POLE3 and POLE4.</text>
</comment>
<comment type="subcellular location">
    <subcellularLocation>
        <location>Nucleus</location>
    </subcellularLocation>
</comment>
<comment type="miscellaneous">
    <text>In eukaryotes there are five DNA polymerases: alpha, beta, gamma, delta, and epsilon which are responsible for different reactions of DNA synthesis.</text>
</comment>
<comment type="similarity">
    <text evidence="3">Belongs to the DNA polymerase epsilon subunit B family.</text>
</comment>
<accession>O54956</accession>
<accession>Q6P3Y7</accession>
<accession>Q8BP72</accession>
<reference key="1">
    <citation type="journal article" date="2005" name="Science">
        <title>The transcriptional landscape of the mammalian genome.</title>
        <authorList>
            <person name="Carninci P."/>
            <person name="Kasukawa T."/>
            <person name="Katayama S."/>
            <person name="Gough J."/>
            <person name="Frith M.C."/>
            <person name="Maeda N."/>
            <person name="Oyama R."/>
            <person name="Ravasi T."/>
            <person name="Lenhard B."/>
            <person name="Wells C."/>
            <person name="Kodzius R."/>
            <person name="Shimokawa K."/>
            <person name="Bajic V.B."/>
            <person name="Brenner S.E."/>
            <person name="Batalov S."/>
            <person name="Forrest A.R."/>
            <person name="Zavolan M."/>
            <person name="Davis M.J."/>
            <person name="Wilming L.G."/>
            <person name="Aidinis V."/>
            <person name="Allen J.E."/>
            <person name="Ambesi-Impiombato A."/>
            <person name="Apweiler R."/>
            <person name="Aturaliya R.N."/>
            <person name="Bailey T.L."/>
            <person name="Bansal M."/>
            <person name="Baxter L."/>
            <person name="Beisel K.W."/>
            <person name="Bersano T."/>
            <person name="Bono H."/>
            <person name="Chalk A.M."/>
            <person name="Chiu K.P."/>
            <person name="Choudhary V."/>
            <person name="Christoffels A."/>
            <person name="Clutterbuck D.R."/>
            <person name="Crowe M.L."/>
            <person name="Dalla E."/>
            <person name="Dalrymple B.P."/>
            <person name="de Bono B."/>
            <person name="Della Gatta G."/>
            <person name="di Bernardo D."/>
            <person name="Down T."/>
            <person name="Engstrom P."/>
            <person name="Fagiolini M."/>
            <person name="Faulkner G."/>
            <person name="Fletcher C.F."/>
            <person name="Fukushima T."/>
            <person name="Furuno M."/>
            <person name="Futaki S."/>
            <person name="Gariboldi M."/>
            <person name="Georgii-Hemming P."/>
            <person name="Gingeras T.R."/>
            <person name="Gojobori T."/>
            <person name="Green R.E."/>
            <person name="Gustincich S."/>
            <person name="Harbers M."/>
            <person name="Hayashi Y."/>
            <person name="Hensch T.K."/>
            <person name="Hirokawa N."/>
            <person name="Hill D."/>
            <person name="Huminiecki L."/>
            <person name="Iacono M."/>
            <person name="Ikeo K."/>
            <person name="Iwama A."/>
            <person name="Ishikawa T."/>
            <person name="Jakt M."/>
            <person name="Kanapin A."/>
            <person name="Katoh M."/>
            <person name="Kawasawa Y."/>
            <person name="Kelso J."/>
            <person name="Kitamura H."/>
            <person name="Kitano H."/>
            <person name="Kollias G."/>
            <person name="Krishnan S.P."/>
            <person name="Kruger A."/>
            <person name="Kummerfeld S.K."/>
            <person name="Kurochkin I.V."/>
            <person name="Lareau L.F."/>
            <person name="Lazarevic D."/>
            <person name="Lipovich L."/>
            <person name="Liu J."/>
            <person name="Liuni S."/>
            <person name="McWilliam S."/>
            <person name="Madan Babu M."/>
            <person name="Madera M."/>
            <person name="Marchionni L."/>
            <person name="Matsuda H."/>
            <person name="Matsuzawa S."/>
            <person name="Miki H."/>
            <person name="Mignone F."/>
            <person name="Miyake S."/>
            <person name="Morris K."/>
            <person name="Mottagui-Tabar S."/>
            <person name="Mulder N."/>
            <person name="Nakano N."/>
            <person name="Nakauchi H."/>
            <person name="Ng P."/>
            <person name="Nilsson R."/>
            <person name="Nishiguchi S."/>
            <person name="Nishikawa S."/>
            <person name="Nori F."/>
            <person name="Ohara O."/>
            <person name="Okazaki Y."/>
            <person name="Orlando V."/>
            <person name="Pang K.C."/>
            <person name="Pavan W.J."/>
            <person name="Pavesi G."/>
            <person name="Pesole G."/>
            <person name="Petrovsky N."/>
            <person name="Piazza S."/>
            <person name="Reed J."/>
            <person name="Reid J.F."/>
            <person name="Ring B.Z."/>
            <person name="Ringwald M."/>
            <person name="Rost B."/>
            <person name="Ruan Y."/>
            <person name="Salzberg S.L."/>
            <person name="Sandelin A."/>
            <person name="Schneider C."/>
            <person name="Schoenbach C."/>
            <person name="Sekiguchi K."/>
            <person name="Semple C.A."/>
            <person name="Seno S."/>
            <person name="Sessa L."/>
            <person name="Sheng Y."/>
            <person name="Shibata Y."/>
            <person name="Shimada H."/>
            <person name="Shimada K."/>
            <person name="Silva D."/>
            <person name="Sinclair B."/>
            <person name="Sperling S."/>
            <person name="Stupka E."/>
            <person name="Sugiura K."/>
            <person name="Sultana R."/>
            <person name="Takenaka Y."/>
            <person name="Taki K."/>
            <person name="Tammoja K."/>
            <person name="Tan S.L."/>
            <person name="Tang S."/>
            <person name="Taylor M.S."/>
            <person name="Tegner J."/>
            <person name="Teichmann S.A."/>
            <person name="Ueda H.R."/>
            <person name="van Nimwegen E."/>
            <person name="Verardo R."/>
            <person name="Wei C.L."/>
            <person name="Yagi K."/>
            <person name="Yamanishi H."/>
            <person name="Zabarovsky E."/>
            <person name="Zhu S."/>
            <person name="Zimmer A."/>
            <person name="Hide W."/>
            <person name="Bult C."/>
            <person name="Grimmond S.M."/>
            <person name="Teasdale R.D."/>
            <person name="Liu E.T."/>
            <person name="Brusic V."/>
            <person name="Quackenbush J."/>
            <person name="Wahlestedt C."/>
            <person name="Mattick J.S."/>
            <person name="Hume D.A."/>
            <person name="Kai C."/>
            <person name="Sasaki D."/>
            <person name="Tomaru Y."/>
            <person name="Fukuda S."/>
            <person name="Kanamori-Katayama M."/>
            <person name="Suzuki M."/>
            <person name="Aoki J."/>
            <person name="Arakawa T."/>
            <person name="Iida J."/>
            <person name="Imamura K."/>
            <person name="Itoh M."/>
            <person name="Kato T."/>
            <person name="Kawaji H."/>
            <person name="Kawagashira N."/>
            <person name="Kawashima T."/>
            <person name="Kojima M."/>
            <person name="Kondo S."/>
            <person name="Konno H."/>
            <person name="Nakano K."/>
            <person name="Ninomiya N."/>
            <person name="Nishio T."/>
            <person name="Okada M."/>
            <person name="Plessy C."/>
            <person name="Shibata K."/>
            <person name="Shiraki T."/>
            <person name="Suzuki S."/>
            <person name="Tagami M."/>
            <person name="Waki K."/>
            <person name="Watahiki A."/>
            <person name="Okamura-Oho Y."/>
            <person name="Suzuki H."/>
            <person name="Kawai J."/>
            <person name="Hayashizaki Y."/>
        </authorList>
    </citation>
    <scope>NUCLEOTIDE SEQUENCE [LARGE SCALE MRNA]</scope>
    <source>
        <strain>C57BL/6J</strain>
    </source>
</reference>
<reference key="2">
    <citation type="journal article" date="2004" name="Genome Res.">
        <title>The status, quality, and expansion of the NIH full-length cDNA project: the Mammalian Gene Collection (MGC).</title>
        <authorList>
            <consortium name="The MGC Project Team"/>
        </authorList>
    </citation>
    <scope>NUCLEOTIDE SEQUENCE [LARGE SCALE MRNA]</scope>
    <source>
        <tissue>Jaw</tissue>
    </source>
</reference>
<reference key="3">
    <citation type="journal article" date="1998" name="Nucleic Acids Res.">
        <title>The small subunits of human and mouse DNA polymerase epsilon are homologous to the second largest subunit of the yeast Saccharomyces cerevisiae DNA polymerase epsilon.</title>
        <authorList>
            <person name="Jokela M."/>
            <person name="Makiniemi M."/>
            <person name="Lehtonen S."/>
            <person name="Szpirer C."/>
            <person name="Hellman U."/>
            <person name="Syvaeoja J.E."/>
        </authorList>
    </citation>
    <scope>NUCLEOTIDE SEQUENCE [MRNA] OF 2-527</scope>
</reference>
<dbReference type="EMBL" id="AK077592">
    <property type="protein sequence ID" value="BAC36883.1"/>
    <property type="molecule type" value="mRNA"/>
</dbReference>
<dbReference type="EMBL" id="BC063772">
    <property type="protein sequence ID" value="AAH63772.1"/>
    <property type="molecule type" value="mRNA"/>
</dbReference>
<dbReference type="EMBL" id="AF036898">
    <property type="protein sequence ID" value="AAC40045.1"/>
    <property type="molecule type" value="mRNA"/>
</dbReference>
<dbReference type="CCDS" id="CCDS36463.1"/>
<dbReference type="RefSeq" id="NP_035263.1">
    <property type="nucleotide sequence ID" value="NM_011133.2"/>
</dbReference>
<dbReference type="SMR" id="O54956"/>
<dbReference type="BioGRID" id="202293">
    <property type="interactions" value="5"/>
</dbReference>
<dbReference type="ComplexPortal" id="CPX-2109">
    <property type="entry name" value="DNA polymerase epsilon complex"/>
</dbReference>
<dbReference type="FunCoup" id="O54956">
    <property type="interactions" value="2370"/>
</dbReference>
<dbReference type="STRING" id="10090.ENSMUSP00000021359"/>
<dbReference type="PhosphoSitePlus" id="O54956"/>
<dbReference type="PaxDb" id="10090-ENSMUSP00000021359"/>
<dbReference type="PeptideAtlas" id="O54956"/>
<dbReference type="ProteomicsDB" id="279568"/>
<dbReference type="Pumba" id="O54956"/>
<dbReference type="Antibodypedia" id="23530">
    <property type="antibodies" value="130 antibodies from 23 providers"/>
</dbReference>
<dbReference type="DNASU" id="18974"/>
<dbReference type="Ensembl" id="ENSMUST00000021359.7">
    <property type="protein sequence ID" value="ENSMUSP00000021359.6"/>
    <property type="gene ID" value="ENSMUSG00000020974.7"/>
</dbReference>
<dbReference type="GeneID" id="18974"/>
<dbReference type="KEGG" id="mmu:18974"/>
<dbReference type="UCSC" id="uc007nrv.1">
    <property type="organism name" value="mouse"/>
</dbReference>
<dbReference type="AGR" id="MGI:1197514"/>
<dbReference type="CTD" id="5427"/>
<dbReference type="MGI" id="MGI:1197514">
    <property type="gene designation" value="Pole2"/>
</dbReference>
<dbReference type="VEuPathDB" id="HostDB:ENSMUSG00000020974"/>
<dbReference type="eggNOG" id="KOG3818">
    <property type="taxonomic scope" value="Eukaryota"/>
</dbReference>
<dbReference type="GeneTree" id="ENSGT00390000012435"/>
<dbReference type="HOGENOM" id="CLU_010628_2_0_1"/>
<dbReference type="InParanoid" id="O54956"/>
<dbReference type="OMA" id="FFCEGCF"/>
<dbReference type="OrthoDB" id="10254730at2759"/>
<dbReference type="PhylomeDB" id="O54956"/>
<dbReference type="TreeFam" id="TF103007"/>
<dbReference type="Reactome" id="R-MMU-110314">
    <property type="pathway name" value="Recognition of DNA damage by PCNA-containing replication complex"/>
</dbReference>
<dbReference type="Reactome" id="R-MMU-5651801">
    <property type="pathway name" value="PCNA-Dependent Long Patch Base Excision Repair"/>
</dbReference>
<dbReference type="Reactome" id="R-MMU-5656169">
    <property type="pathway name" value="Termination of translesion DNA synthesis"/>
</dbReference>
<dbReference type="Reactome" id="R-MMU-5685942">
    <property type="pathway name" value="HDR through Homologous Recombination (HRR)"/>
</dbReference>
<dbReference type="Reactome" id="R-MMU-5696397">
    <property type="pathway name" value="Gap-filling DNA repair synthesis and ligation in GG-NER"/>
</dbReference>
<dbReference type="Reactome" id="R-MMU-5696400">
    <property type="pathway name" value="Dual Incision in GG-NER"/>
</dbReference>
<dbReference type="Reactome" id="R-MMU-6782135">
    <property type="pathway name" value="Dual incision in TC-NER"/>
</dbReference>
<dbReference type="Reactome" id="R-MMU-6782210">
    <property type="pathway name" value="Gap-filling DNA repair synthesis and ligation in TC-NER"/>
</dbReference>
<dbReference type="Reactome" id="R-MMU-68952">
    <property type="pathway name" value="DNA replication initiation"/>
</dbReference>
<dbReference type="Reactome" id="R-MMU-68962">
    <property type="pathway name" value="Activation of the pre-replicative complex"/>
</dbReference>
<dbReference type="BioGRID-ORCS" id="18974">
    <property type="hits" value="55 hits in 113 CRISPR screens"/>
</dbReference>
<dbReference type="ChiTaRS" id="Pole2">
    <property type="organism name" value="mouse"/>
</dbReference>
<dbReference type="PRO" id="PR:O54956"/>
<dbReference type="Proteomes" id="UP000000589">
    <property type="component" value="Chromosome 12"/>
</dbReference>
<dbReference type="RNAct" id="O54956">
    <property type="molecule type" value="protein"/>
</dbReference>
<dbReference type="Bgee" id="ENSMUSG00000020974">
    <property type="expression patterns" value="Expressed in mesenchyme of shoulder and 112 other cell types or tissues"/>
</dbReference>
<dbReference type="ExpressionAtlas" id="O54956">
    <property type="expression patterns" value="baseline and differential"/>
</dbReference>
<dbReference type="GO" id="GO:0008622">
    <property type="term" value="C:epsilon DNA polymerase complex"/>
    <property type="evidence" value="ECO:0000250"/>
    <property type="project" value="UniProtKB"/>
</dbReference>
<dbReference type="GO" id="GO:0016604">
    <property type="term" value="C:nuclear body"/>
    <property type="evidence" value="ECO:0007669"/>
    <property type="project" value="Ensembl"/>
</dbReference>
<dbReference type="GO" id="GO:0003677">
    <property type="term" value="F:DNA binding"/>
    <property type="evidence" value="ECO:0007669"/>
    <property type="project" value="UniProtKB-KW"/>
</dbReference>
<dbReference type="GO" id="GO:0006261">
    <property type="term" value="P:DNA-templated DNA replication"/>
    <property type="evidence" value="ECO:0000266"/>
    <property type="project" value="ComplexPortal"/>
</dbReference>
<dbReference type="FunFam" id="1.10.8.60:FF:000053">
    <property type="entry name" value="DNA polymerase epsilon subunit"/>
    <property type="match status" value="1"/>
</dbReference>
<dbReference type="Gene3D" id="1.10.8.60">
    <property type="match status" value="1"/>
</dbReference>
<dbReference type="Gene3D" id="3.60.21.60">
    <property type="match status" value="1"/>
</dbReference>
<dbReference type="InterPro" id="IPR007185">
    <property type="entry name" value="DNA_pol_a/d/e_bsu"/>
</dbReference>
<dbReference type="InterPro" id="IPR024639">
    <property type="entry name" value="DNA_pol_e_bsu_N"/>
</dbReference>
<dbReference type="InterPro" id="IPR016266">
    <property type="entry name" value="POLE2"/>
</dbReference>
<dbReference type="PANTHER" id="PTHR12708:SF0">
    <property type="entry name" value="DNA POLYMERASE EPSILON SUBUNIT 2"/>
    <property type="match status" value="1"/>
</dbReference>
<dbReference type="PANTHER" id="PTHR12708">
    <property type="entry name" value="DNA POLYMERASE EPSILON SUBUNIT B"/>
    <property type="match status" value="1"/>
</dbReference>
<dbReference type="Pfam" id="PF04042">
    <property type="entry name" value="DNA_pol_E_B"/>
    <property type="match status" value="1"/>
</dbReference>
<dbReference type="Pfam" id="PF12213">
    <property type="entry name" value="Dpoe2NT"/>
    <property type="match status" value="1"/>
</dbReference>
<dbReference type="PIRSF" id="PIRSF000799">
    <property type="entry name" value="DNA_pol_eps_2"/>
    <property type="match status" value="1"/>
</dbReference>
<feature type="chain" id="PRO_0000071563" description="DNA polymerase epsilon subunit 2">
    <location>
        <begin position="1"/>
        <end position="527"/>
    </location>
</feature>
<feature type="sequence conflict" description="In Ref. 2; AAH63772." evidence="3" ref="2">
    <original>M</original>
    <variation>V</variation>
    <location>
        <position position="78"/>
    </location>
</feature>
<name>DPOE2_MOUSE</name>
<proteinExistence type="evidence at transcript level"/>
<gene>
    <name type="primary">Pole2</name>
</gene>